<comment type="function">
    <text evidence="3 6 7 9">Member of the granin protein family that regulates the biogenesis of secretory granules (PubMed:16219686). Acts as a sorting receptor for intragranular proteins including chromogranin A/CHGA (PubMed:12388744). May also play a role in angiogenesis (PubMed:28330905). Promotes endothelial proliferation, migration and tube formation through MEK/ERK signaling pathway (By similarity).</text>
</comment>
<comment type="subunit">
    <text evidence="3 6 7">Interacts with CHGA (PubMed:12388744). Interacts with secretogranin II/SCG2 (By similarity). Interacts (via C-terminus) with CPE (PubMed:16219686).</text>
</comment>
<comment type="subcellular location">
    <subcellularLocation>
        <location evidence="6 7">Cytoplasmic vesicle</location>
        <location evidence="6 7">Secretory vesicle</location>
    </subcellularLocation>
    <subcellularLocation>
        <location evidence="2">Cytoplasmic vesicle</location>
        <location evidence="2">Secretory vesicle membrane</location>
        <topology evidence="1">Peripheral membrane protein</topology>
    </subcellularLocation>
    <subcellularLocation>
        <location evidence="6">Secreted</location>
    </subcellularLocation>
    <text evidence="2">Associated with the secretory granule membrane through direct binding to cholesterol-enriched lipid rafts.</text>
</comment>
<comment type="alternative products">
    <event type="alternative splicing"/>
    <isoform>
        <id>P47867-1</id>
        <name>1</name>
        <sequence type="displayed"/>
    </isoform>
    <isoform>
        <id>P47867-2</id>
        <name>2</name>
        <sequence type="described" ref="VSP_042877"/>
    </isoform>
</comment>
<comment type="tissue specificity">
    <text evidence="8">Expressed in various brain areas, with highest levels in the arcuate nucleus and the lateral hypothalamic area, as well as the paraventricular nucleus and the ventromedial hypothalamus (at protein level).</text>
</comment>
<name>SCG3_MOUSE</name>
<evidence type="ECO:0000250" key="1"/>
<evidence type="ECO:0000250" key="2">
    <source>
        <dbReference type="UniProtKB" id="P47868"/>
    </source>
</evidence>
<evidence type="ECO:0000250" key="3">
    <source>
        <dbReference type="UniProtKB" id="Q8WXD2"/>
    </source>
</evidence>
<evidence type="ECO:0000255" key="4"/>
<evidence type="ECO:0000256" key="5">
    <source>
        <dbReference type="SAM" id="MobiDB-lite"/>
    </source>
</evidence>
<evidence type="ECO:0000269" key="6">
    <source>
    </source>
</evidence>
<evidence type="ECO:0000269" key="7">
    <source>
    </source>
</evidence>
<evidence type="ECO:0000269" key="8">
    <source>
    </source>
</evidence>
<evidence type="ECO:0000269" key="9">
    <source>
    </source>
</evidence>
<evidence type="ECO:0000303" key="10">
    <source>
    </source>
</evidence>
<evidence type="ECO:0000303" key="11">
    <source>
    </source>
</evidence>
<evidence type="ECO:0007744" key="12">
    <source>
    </source>
</evidence>
<dbReference type="EMBL" id="U02982">
    <property type="protein sequence ID" value="AAA56636.1"/>
    <property type="molecule type" value="mRNA"/>
</dbReference>
<dbReference type="EMBL" id="AK133655">
    <property type="protein sequence ID" value="BAE21767.1"/>
    <property type="molecule type" value="mRNA"/>
</dbReference>
<dbReference type="EMBL" id="AK139140">
    <property type="protein sequence ID" value="BAE23899.1"/>
    <property type="molecule type" value="mRNA"/>
</dbReference>
<dbReference type="EMBL" id="AK158315">
    <property type="protein sequence ID" value="BAE34456.1"/>
    <property type="molecule type" value="mRNA"/>
</dbReference>
<dbReference type="EMBL" id="AK164089">
    <property type="protein sequence ID" value="BAE37620.1"/>
    <property type="molecule type" value="mRNA"/>
</dbReference>
<dbReference type="EMBL" id="CH466522">
    <property type="protein sequence ID" value="EDL26334.1"/>
    <property type="molecule type" value="Genomic_DNA"/>
</dbReference>
<dbReference type="EMBL" id="BC024785">
    <property type="protein sequence ID" value="AAH24785.1"/>
    <property type="molecule type" value="mRNA"/>
</dbReference>
<dbReference type="CCDS" id="CCDS23347.1">
    <molecule id="P47867-1"/>
</dbReference>
<dbReference type="CCDS" id="CCDS90627.1">
    <molecule id="P47867-2"/>
</dbReference>
<dbReference type="RefSeq" id="NP_001158262.1">
    <molecule id="P47867-2"/>
    <property type="nucleotide sequence ID" value="NM_001164790.1"/>
</dbReference>
<dbReference type="RefSeq" id="NP_033156.1">
    <molecule id="P47867-1"/>
    <property type="nucleotide sequence ID" value="NM_009130.3"/>
</dbReference>
<dbReference type="SMR" id="P47867"/>
<dbReference type="BioGRID" id="203091">
    <property type="interactions" value="2"/>
</dbReference>
<dbReference type="FunCoup" id="P47867">
    <property type="interactions" value="104"/>
</dbReference>
<dbReference type="IntAct" id="P47867">
    <property type="interactions" value="1"/>
</dbReference>
<dbReference type="MINT" id="P47867"/>
<dbReference type="STRING" id="10090.ENSMUSP00000034699"/>
<dbReference type="GlyConnect" id="2690">
    <property type="glycosylation" value="1 N-Linked glycan (1 site)"/>
</dbReference>
<dbReference type="GlyCosmos" id="P47867">
    <property type="glycosylation" value="1 site, 1 glycan"/>
</dbReference>
<dbReference type="GlyGen" id="P47867">
    <property type="glycosylation" value="3 sites, 3 N-linked glycans (2 sites)"/>
</dbReference>
<dbReference type="iPTMnet" id="P47867"/>
<dbReference type="PhosphoSitePlus" id="P47867"/>
<dbReference type="CPTAC" id="non-CPTAC-3875"/>
<dbReference type="jPOST" id="P47867"/>
<dbReference type="PaxDb" id="10090-ENSMUSP00000034699"/>
<dbReference type="PeptideAtlas" id="P47867"/>
<dbReference type="ProteomicsDB" id="256748">
    <molecule id="P47867-1"/>
</dbReference>
<dbReference type="ProteomicsDB" id="256749">
    <molecule id="P47867-2"/>
</dbReference>
<dbReference type="Antibodypedia" id="1520">
    <property type="antibodies" value="270 antibodies from 31 providers"/>
</dbReference>
<dbReference type="DNASU" id="20255"/>
<dbReference type="Ensembl" id="ENSMUST00000034699.8">
    <molecule id="P47867-1"/>
    <property type="protein sequence ID" value="ENSMUSP00000034699.7"/>
    <property type="gene ID" value="ENSMUSG00000032181.8"/>
</dbReference>
<dbReference type="Ensembl" id="ENSMUST00000213324.2">
    <molecule id="P47867-2"/>
    <property type="protein sequence ID" value="ENSMUSP00000149561.2"/>
    <property type="gene ID" value="ENSMUSG00000032181.8"/>
</dbReference>
<dbReference type="GeneID" id="20255"/>
<dbReference type="KEGG" id="mmu:20255"/>
<dbReference type="UCSC" id="uc009qss.2">
    <molecule id="P47867-1"/>
    <property type="organism name" value="mouse"/>
</dbReference>
<dbReference type="UCSC" id="uc009qst.2">
    <molecule id="P47867-2"/>
    <property type="organism name" value="mouse"/>
</dbReference>
<dbReference type="AGR" id="MGI:103032"/>
<dbReference type="CTD" id="29106"/>
<dbReference type="MGI" id="MGI:103032">
    <property type="gene designation" value="Scg3"/>
</dbReference>
<dbReference type="VEuPathDB" id="HostDB:ENSMUSG00000032181"/>
<dbReference type="eggNOG" id="ENOG502QUJH">
    <property type="taxonomic scope" value="Eukaryota"/>
</dbReference>
<dbReference type="GeneTree" id="ENSGT00390000005488"/>
<dbReference type="HOGENOM" id="CLU_031198_1_0_1"/>
<dbReference type="InParanoid" id="P47867"/>
<dbReference type="OMA" id="TDKAIHN"/>
<dbReference type="OrthoDB" id="9941750at2759"/>
<dbReference type="PhylomeDB" id="P47867"/>
<dbReference type="TreeFam" id="TF331266"/>
<dbReference type="Reactome" id="R-MMU-114608">
    <property type="pathway name" value="Platelet degranulation"/>
</dbReference>
<dbReference type="Reactome" id="R-MMU-381426">
    <property type="pathway name" value="Regulation of Insulin-like Growth Factor (IGF) transport and uptake by Insulin-like Growth Factor Binding Proteins (IGFBPs)"/>
</dbReference>
<dbReference type="Reactome" id="R-MMU-8957275">
    <property type="pathway name" value="Post-translational protein phosphorylation"/>
</dbReference>
<dbReference type="BioGRID-ORCS" id="20255">
    <property type="hits" value="3 hits in 77 CRISPR screens"/>
</dbReference>
<dbReference type="PRO" id="PR:P47867"/>
<dbReference type="Proteomes" id="UP000000589">
    <property type="component" value="Chromosome 9"/>
</dbReference>
<dbReference type="RNAct" id="P47867">
    <property type="molecule type" value="protein"/>
</dbReference>
<dbReference type="Bgee" id="ENSMUSG00000032181">
    <property type="expression patterns" value="Expressed in cerebellar nuclear complex and 195 other cell types or tissues"/>
</dbReference>
<dbReference type="ExpressionAtlas" id="P47867">
    <property type="expression patterns" value="baseline and differential"/>
</dbReference>
<dbReference type="GO" id="GO:0005576">
    <property type="term" value="C:extracellular region"/>
    <property type="evidence" value="ECO:0007669"/>
    <property type="project" value="UniProtKB-SubCell"/>
</dbReference>
<dbReference type="GO" id="GO:0030667">
    <property type="term" value="C:secretory granule membrane"/>
    <property type="evidence" value="ECO:0000314"/>
    <property type="project" value="MGI"/>
</dbReference>
<dbReference type="GO" id="GO:0030658">
    <property type="term" value="C:transport vesicle membrane"/>
    <property type="evidence" value="ECO:0007669"/>
    <property type="project" value="UniProtKB-SubCell"/>
</dbReference>
<dbReference type="GO" id="GO:0033366">
    <property type="term" value="P:protein localization to secretory granule"/>
    <property type="evidence" value="ECO:0000314"/>
    <property type="project" value="MGI"/>
</dbReference>
<dbReference type="InterPro" id="IPR026197">
    <property type="entry name" value="SCG3"/>
</dbReference>
<dbReference type="PANTHER" id="PTHR17388">
    <property type="entry name" value="SECRETOGRANIN III"/>
    <property type="match status" value="1"/>
</dbReference>
<dbReference type="PANTHER" id="PTHR17388:SF2">
    <property type="entry name" value="SECRETOGRANIN-3"/>
    <property type="match status" value="1"/>
</dbReference>
<dbReference type="Pfam" id="PF15467">
    <property type="entry name" value="SGIII"/>
    <property type="match status" value="1"/>
</dbReference>
<organism>
    <name type="scientific">Mus musculus</name>
    <name type="common">Mouse</name>
    <dbReference type="NCBI Taxonomy" id="10090"/>
    <lineage>
        <taxon>Eukaryota</taxon>
        <taxon>Metazoa</taxon>
        <taxon>Chordata</taxon>
        <taxon>Craniata</taxon>
        <taxon>Vertebrata</taxon>
        <taxon>Euteleostomi</taxon>
        <taxon>Mammalia</taxon>
        <taxon>Eutheria</taxon>
        <taxon>Euarchontoglires</taxon>
        <taxon>Glires</taxon>
        <taxon>Rodentia</taxon>
        <taxon>Myomorpha</taxon>
        <taxon>Muroidea</taxon>
        <taxon>Muridae</taxon>
        <taxon>Murinae</taxon>
        <taxon>Mus</taxon>
        <taxon>Mus</taxon>
    </lineage>
</organism>
<reference key="1">
    <citation type="journal article" date="1993" name="J. Mol. Neurosci.">
        <title>Primary structure of mouse secretogranin III and its absence from deficient mice.</title>
        <authorList>
            <person name="Dopazo A."/>
            <person name="Lovenberg T.W."/>
            <person name="Danielson P.E."/>
            <person name="Ottiger H.-P."/>
            <person name="Sutcliffe J.G."/>
        </authorList>
    </citation>
    <scope>NUCLEOTIDE SEQUENCE [MRNA] (ISOFORM 1)</scope>
    <source>
        <tissue>Brain</tissue>
    </source>
</reference>
<reference key="2">
    <citation type="journal article" date="2005" name="Science">
        <title>The transcriptional landscape of the mammalian genome.</title>
        <authorList>
            <person name="Carninci P."/>
            <person name="Kasukawa T."/>
            <person name="Katayama S."/>
            <person name="Gough J."/>
            <person name="Frith M.C."/>
            <person name="Maeda N."/>
            <person name="Oyama R."/>
            <person name="Ravasi T."/>
            <person name="Lenhard B."/>
            <person name="Wells C."/>
            <person name="Kodzius R."/>
            <person name="Shimokawa K."/>
            <person name="Bajic V.B."/>
            <person name="Brenner S.E."/>
            <person name="Batalov S."/>
            <person name="Forrest A.R."/>
            <person name="Zavolan M."/>
            <person name="Davis M.J."/>
            <person name="Wilming L.G."/>
            <person name="Aidinis V."/>
            <person name="Allen J.E."/>
            <person name="Ambesi-Impiombato A."/>
            <person name="Apweiler R."/>
            <person name="Aturaliya R.N."/>
            <person name="Bailey T.L."/>
            <person name="Bansal M."/>
            <person name="Baxter L."/>
            <person name="Beisel K.W."/>
            <person name="Bersano T."/>
            <person name="Bono H."/>
            <person name="Chalk A.M."/>
            <person name="Chiu K.P."/>
            <person name="Choudhary V."/>
            <person name="Christoffels A."/>
            <person name="Clutterbuck D.R."/>
            <person name="Crowe M.L."/>
            <person name="Dalla E."/>
            <person name="Dalrymple B.P."/>
            <person name="de Bono B."/>
            <person name="Della Gatta G."/>
            <person name="di Bernardo D."/>
            <person name="Down T."/>
            <person name="Engstrom P."/>
            <person name="Fagiolini M."/>
            <person name="Faulkner G."/>
            <person name="Fletcher C.F."/>
            <person name="Fukushima T."/>
            <person name="Furuno M."/>
            <person name="Futaki S."/>
            <person name="Gariboldi M."/>
            <person name="Georgii-Hemming P."/>
            <person name="Gingeras T.R."/>
            <person name="Gojobori T."/>
            <person name="Green R.E."/>
            <person name="Gustincich S."/>
            <person name="Harbers M."/>
            <person name="Hayashi Y."/>
            <person name="Hensch T.K."/>
            <person name="Hirokawa N."/>
            <person name="Hill D."/>
            <person name="Huminiecki L."/>
            <person name="Iacono M."/>
            <person name="Ikeo K."/>
            <person name="Iwama A."/>
            <person name="Ishikawa T."/>
            <person name="Jakt M."/>
            <person name="Kanapin A."/>
            <person name="Katoh M."/>
            <person name="Kawasawa Y."/>
            <person name="Kelso J."/>
            <person name="Kitamura H."/>
            <person name="Kitano H."/>
            <person name="Kollias G."/>
            <person name="Krishnan S.P."/>
            <person name="Kruger A."/>
            <person name="Kummerfeld S.K."/>
            <person name="Kurochkin I.V."/>
            <person name="Lareau L.F."/>
            <person name="Lazarevic D."/>
            <person name="Lipovich L."/>
            <person name="Liu J."/>
            <person name="Liuni S."/>
            <person name="McWilliam S."/>
            <person name="Madan Babu M."/>
            <person name="Madera M."/>
            <person name="Marchionni L."/>
            <person name="Matsuda H."/>
            <person name="Matsuzawa S."/>
            <person name="Miki H."/>
            <person name="Mignone F."/>
            <person name="Miyake S."/>
            <person name="Morris K."/>
            <person name="Mottagui-Tabar S."/>
            <person name="Mulder N."/>
            <person name="Nakano N."/>
            <person name="Nakauchi H."/>
            <person name="Ng P."/>
            <person name="Nilsson R."/>
            <person name="Nishiguchi S."/>
            <person name="Nishikawa S."/>
            <person name="Nori F."/>
            <person name="Ohara O."/>
            <person name="Okazaki Y."/>
            <person name="Orlando V."/>
            <person name="Pang K.C."/>
            <person name="Pavan W.J."/>
            <person name="Pavesi G."/>
            <person name="Pesole G."/>
            <person name="Petrovsky N."/>
            <person name="Piazza S."/>
            <person name="Reed J."/>
            <person name="Reid J.F."/>
            <person name="Ring B.Z."/>
            <person name="Ringwald M."/>
            <person name="Rost B."/>
            <person name="Ruan Y."/>
            <person name="Salzberg S.L."/>
            <person name="Sandelin A."/>
            <person name="Schneider C."/>
            <person name="Schoenbach C."/>
            <person name="Sekiguchi K."/>
            <person name="Semple C.A."/>
            <person name="Seno S."/>
            <person name="Sessa L."/>
            <person name="Sheng Y."/>
            <person name="Shibata Y."/>
            <person name="Shimada H."/>
            <person name="Shimada K."/>
            <person name="Silva D."/>
            <person name="Sinclair B."/>
            <person name="Sperling S."/>
            <person name="Stupka E."/>
            <person name="Sugiura K."/>
            <person name="Sultana R."/>
            <person name="Takenaka Y."/>
            <person name="Taki K."/>
            <person name="Tammoja K."/>
            <person name="Tan S.L."/>
            <person name="Tang S."/>
            <person name="Taylor M.S."/>
            <person name="Tegner J."/>
            <person name="Teichmann S.A."/>
            <person name="Ueda H.R."/>
            <person name="van Nimwegen E."/>
            <person name="Verardo R."/>
            <person name="Wei C.L."/>
            <person name="Yagi K."/>
            <person name="Yamanishi H."/>
            <person name="Zabarovsky E."/>
            <person name="Zhu S."/>
            <person name="Zimmer A."/>
            <person name="Hide W."/>
            <person name="Bult C."/>
            <person name="Grimmond S.M."/>
            <person name="Teasdale R.D."/>
            <person name="Liu E.T."/>
            <person name="Brusic V."/>
            <person name="Quackenbush J."/>
            <person name="Wahlestedt C."/>
            <person name="Mattick J.S."/>
            <person name="Hume D.A."/>
            <person name="Kai C."/>
            <person name="Sasaki D."/>
            <person name="Tomaru Y."/>
            <person name="Fukuda S."/>
            <person name="Kanamori-Katayama M."/>
            <person name="Suzuki M."/>
            <person name="Aoki J."/>
            <person name="Arakawa T."/>
            <person name="Iida J."/>
            <person name="Imamura K."/>
            <person name="Itoh M."/>
            <person name="Kato T."/>
            <person name="Kawaji H."/>
            <person name="Kawagashira N."/>
            <person name="Kawashima T."/>
            <person name="Kojima M."/>
            <person name="Kondo S."/>
            <person name="Konno H."/>
            <person name="Nakano K."/>
            <person name="Ninomiya N."/>
            <person name="Nishio T."/>
            <person name="Okada M."/>
            <person name="Plessy C."/>
            <person name="Shibata K."/>
            <person name="Shiraki T."/>
            <person name="Suzuki S."/>
            <person name="Tagami M."/>
            <person name="Waki K."/>
            <person name="Watahiki A."/>
            <person name="Okamura-Oho Y."/>
            <person name="Suzuki H."/>
            <person name="Kawai J."/>
            <person name="Hayashizaki Y."/>
        </authorList>
    </citation>
    <scope>NUCLEOTIDE SEQUENCE [LARGE SCALE MRNA] (ISOFORMS 1 AND 2)</scope>
    <source>
        <strain>C57BL/6J</strain>
        <tissue>Cerebellum</tissue>
        <tissue>Embryonic spinal cord</tissue>
        <tissue>Inner ear</tissue>
        <tissue>Pituitary</tissue>
    </source>
</reference>
<reference key="3">
    <citation type="submission" date="2005-07" db="EMBL/GenBank/DDBJ databases">
        <authorList>
            <person name="Mural R.J."/>
            <person name="Adams M.D."/>
            <person name="Myers E.W."/>
            <person name="Smith H.O."/>
            <person name="Venter J.C."/>
        </authorList>
    </citation>
    <scope>NUCLEOTIDE SEQUENCE [LARGE SCALE GENOMIC DNA]</scope>
</reference>
<reference key="4">
    <citation type="journal article" date="2004" name="Genome Res.">
        <title>The status, quality, and expansion of the NIH full-length cDNA project: the Mammalian Gene Collection (MGC).</title>
        <authorList>
            <consortium name="The MGC Project Team"/>
        </authorList>
    </citation>
    <scope>NUCLEOTIDE SEQUENCE [LARGE SCALE MRNA] (ISOFORM 2)</scope>
    <source>
        <strain>C57BL/6J</strain>
        <tissue>Retina</tissue>
    </source>
</reference>
<reference key="5">
    <citation type="journal article" date="2002" name="Mol. Biol. Cell">
        <title>Identification of a chromogranin A domain that mediates binding to secretogranin III and targeting to secretory granules in pituitary cells and pancreatic beta-cells.</title>
        <authorList>
            <person name="Hosaka M."/>
            <person name="Watanabe T."/>
            <person name="Sakai Y."/>
            <person name="Uchiyama Y."/>
            <person name="Takeuchi T."/>
        </authorList>
    </citation>
    <scope>INTERACTION WITH CHGA</scope>
    <scope>SUBCELLULAR LOCATION</scope>
    <scope>FUNCTION</scope>
</reference>
<reference key="6">
    <citation type="journal article" date="2005" name="J. Cell Sci.">
        <title>Interaction between secretogranin III and carboxypeptidase E facilitates prohormone sorting within secretory granules.</title>
        <authorList>
            <person name="Hosaka M."/>
            <person name="Watanabe T."/>
            <person name="Sakai Y."/>
            <person name="Kato T."/>
            <person name="Takeuchi T."/>
        </authorList>
    </citation>
    <scope>FUNCTION</scope>
    <scope>INTERACTION WITH CPE</scope>
    <scope>SUBCELLULAR LOCATION</scope>
</reference>
<reference key="7">
    <citation type="journal article" date="2007" name="J. Clin. Endocrinol. Metab.">
        <title>Functional single-nucleotide polymorphisms in the secretogranin III (SCG3) gene that form secretory granules with appetite-related neuropeptides are associated with obesity.</title>
        <authorList>
            <person name="Tanabe A."/>
            <person name="Yanagiya T."/>
            <person name="Iida A."/>
            <person name="Saito S."/>
            <person name="Sekine A."/>
            <person name="Takahashi A."/>
            <person name="Nakamura T."/>
            <person name="Tsunoda T."/>
            <person name="Kamohara S."/>
            <person name="Nakata Y."/>
            <person name="Kotani K."/>
            <person name="Komatsu R."/>
            <person name="Itoh N."/>
            <person name="Mineo I."/>
            <person name="Wada J."/>
            <person name="Funahashi T."/>
            <person name="Miyazaki S."/>
            <person name="Tokunaga K."/>
            <person name="Hamaguchi K."/>
            <person name="Shimada T."/>
            <person name="Tanaka K."/>
            <person name="Yamada K."/>
            <person name="Hanafusa T."/>
            <person name="Oikawa S."/>
            <person name="Yoshimatsu H."/>
            <person name="Sakata T."/>
            <person name="Matsuzawa Y."/>
            <person name="Kamatani N."/>
            <person name="Nakamura Y."/>
            <person name="Hotta K."/>
        </authorList>
    </citation>
    <scope>TISSUE SPECIFICITY</scope>
</reference>
<reference key="8">
    <citation type="journal article" date="2010" name="Cell">
        <title>A tissue-specific atlas of mouse protein phosphorylation and expression.</title>
        <authorList>
            <person name="Huttlin E.L."/>
            <person name="Jedrychowski M.P."/>
            <person name="Elias J.E."/>
            <person name="Goswami T."/>
            <person name="Rad R."/>
            <person name="Beausoleil S.A."/>
            <person name="Villen J."/>
            <person name="Haas W."/>
            <person name="Sowa M.E."/>
            <person name="Gygi S.P."/>
        </authorList>
    </citation>
    <scope>PHOSPHORYLATION [LARGE SCALE ANALYSIS] AT SER-40 AND SER-365</scope>
    <scope>IDENTIFICATION BY MASS SPECTROMETRY [LARGE SCALE ANALYSIS]</scope>
    <source>
        <tissue>Brain</tissue>
        <tissue>Pancreas</tissue>
    </source>
</reference>
<reference key="9">
    <citation type="journal article" date="2017" name="J. Exp. Med.">
        <title>Secretogranin III as a disease-associated ligand for antiangiogenic therapy of diabetic retinopathy.</title>
        <authorList>
            <person name="LeBlanc M.E."/>
            <person name="Wang W."/>
            <person name="Chen X."/>
            <person name="Caberoy N.B."/>
            <person name="Guo F."/>
            <person name="Shen C."/>
            <person name="Ji Y."/>
            <person name="Tian H."/>
            <person name="Wang H."/>
            <person name="Chen R."/>
            <person name="Li W."/>
        </authorList>
    </citation>
    <scope>FUNCTION</scope>
</reference>
<sequence>MGFLWTGSWILVLVLNSGPIQAFPKPEGSQDKSLHNRELSAERPLNEQIAEAEADKIKKAFPSESKPSESNYSSVDNLNLLRAITEKETVEKERQSIRSPPFDNQLNVEDADSTKNRKLIDEYDSTKSGLDHKFQDDPDGLHQLDGTPLTAEDIVHKIATRIYEENDRGVFDKIVSKLLNLGLITESQAHTLEDEVAEALQKLISKEANNYEETLDKPTSRTENQDGKIPEKVTPVAAVQDGFTNRENDETVSNTLTLSNGLERRTNPHREDDFEELQYFPNFYALLTSIDSEKEAKEKETLITIMKTLIDFVKMMVKYGTISPEEGVSYLENLDETIALQTKNKLEKNTTDSKSKLFPAPPEKSQEETDSTKEEAAKMEKEYGSLKDSTKDDNSNLGGKTDEATGKTEAYLEAIRKNIEWLKKHNKKGNKEDYDLSKMRDFINQQADAYVEKGILDKEEANAIKRIYSSL</sequence>
<protein>
    <recommendedName>
        <fullName>Secretogranin-3</fullName>
    </recommendedName>
    <alternativeName>
        <fullName>Secretogranin III</fullName>
        <shortName>SgIII</shortName>
    </alternativeName>
</protein>
<keyword id="KW-0025">Alternative splicing</keyword>
<keyword id="KW-0165">Cleavage on pair of basic residues</keyword>
<keyword id="KW-0968">Cytoplasmic vesicle</keyword>
<keyword id="KW-0325">Glycoprotein</keyword>
<keyword id="KW-0472">Membrane</keyword>
<keyword id="KW-0597">Phosphoprotein</keyword>
<keyword id="KW-0654">Proteoglycan</keyword>
<keyword id="KW-1185">Reference proteome</keyword>
<keyword id="KW-0964">Secreted</keyword>
<keyword id="KW-0732">Signal</keyword>
<accession>P47867</accession>
<accession>Q3UTT1</accession>
<accession>Q3UZT8</accession>
<accession>Q8R1D7</accession>
<proteinExistence type="evidence at protein level"/>
<gene>
    <name type="primary">Scg3</name>
</gene>
<feature type="signal peptide" evidence="4">
    <location>
        <begin position="1"/>
        <end position="22"/>
    </location>
</feature>
<feature type="chain" id="PRO_0000005462" description="Secretogranin-3">
    <location>
        <begin position="23"/>
        <end position="471"/>
    </location>
</feature>
<feature type="region of interest" description="Disordered" evidence="5">
    <location>
        <begin position="24"/>
        <end position="45"/>
    </location>
</feature>
<feature type="region of interest" description="Disordered" evidence="5">
    <location>
        <begin position="89"/>
        <end position="108"/>
    </location>
</feature>
<feature type="region of interest" description="Disordered" evidence="5">
    <location>
        <begin position="345"/>
        <end position="404"/>
    </location>
</feature>
<feature type="compositionally biased region" description="Basic and acidic residues" evidence="5">
    <location>
        <begin position="28"/>
        <end position="45"/>
    </location>
</feature>
<feature type="compositionally biased region" description="Basic and acidic residues" evidence="5">
    <location>
        <begin position="345"/>
        <end position="355"/>
    </location>
</feature>
<feature type="compositionally biased region" description="Basic and acidic residues" evidence="5">
    <location>
        <begin position="364"/>
        <end position="404"/>
    </location>
</feature>
<feature type="modified residue" description="Phosphoserine" evidence="12">
    <location>
        <position position="40"/>
    </location>
</feature>
<feature type="modified residue" description="Phosphoserine" evidence="12">
    <location>
        <position position="365"/>
    </location>
</feature>
<feature type="glycosylation site" description="O-linked (Xyl...) (chondroitin sulfate) serine" evidence="3">
    <location>
        <position position="40"/>
    </location>
</feature>
<feature type="splice variant" id="VSP_042877" description="In isoform 2." evidence="10 11">
    <original>SKLFPA</original>
    <variation>T</variation>
    <location>
        <begin position="355"/>
        <end position="360"/>
    </location>
</feature>